<comment type="function">
    <text evidence="1">Protease subunit of a proteasome-like degradation complex believed to be a general protein degrading machinery.</text>
</comment>
<comment type="catalytic activity">
    <reaction evidence="1">
        <text>ATP-dependent cleavage of peptide bonds with broad specificity.</text>
        <dbReference type="EC" id="3.4.25.2"/>
    </reaction>
</comment>
<comment type="activity regulation">
    <text evidence="1">Allosterically activated by HslU binding.</text>
</comment>
<comment type="subunit">
    <text evidence="1">A double ring-shaped homohexamer of HslV is capped on each side by a ring-shaped HslU homohexamer. The assembly of the HslU/HslV complex is dependent on binding of ATP.</text>
</comment>
<comment type="subcellular location">
    <subcellularLocation>
        <location evidence="1">Cytoplasm</location>
    </subcellularLocation>
</comment>
<comment type="similarity">
    <text evidence="1">Belongs to the peptidase T1B family. HslV subfamily.</text>
</comment>
<evidence type="ECO:0000255" key="1">
    <source>
        <dbReference type="HAMAP-Rule" id="MF_00248"/>
    </source>
</evidence>
<reference key="1">
    <citation type="submission" date="2005-08" db="EMBL/GenBank/DDBJ databases">
        <title>Complete sequence of Pelodictyon luteolum DSM 273.</title>
        <authorList>
            <consortium name="US DOE Joint Genome Institute"/>
            <person name="Copeland A."/>
            <person name="Lucas S."/>
            <person name="Lapidus A."/>
            <person name="Barry K."/>
            <person name="Detter J.C."/>
            <person name="Glavina T."/>
            <person name="Hammon N."/>
            <person name="Israni S."/>
            <person name="Pitluck S."/>
            <person name="Bryant D."/>
            <person name="Schmutz J."/>
            <person name="Larimer F."/>
            <person name="Land M."/>
            <person name="Kyrpides N."/>
            <person name="Ivanova N."/>
            <person name="Richardson P."/>
        </authorList>
    </citation>
    <scope>NUCLEOTIDE SEQUENCE [LARGE SCALE GENOMIC DNA]</scope>
    <source>
        <strain>DSM 273 / BCRC 81028 / 2530</strain>
    </source>
</reference>
<gene>
    <name evidence="1" type="primary">hslV</name>
    <name type="ordered locus">Plut_0930</name>
</gene>
<sequence length="182" mass="19823">MKHPKRPVIRSTTVIGVLRDGKAALGSDGQMTLGNTVVKHSTRKIRSLYQGRLLAGFAGATADAITLLDRFEEKLEAYNGKLERAAVELARDWRTDKYLRRLEAMLAIVSSERALIISGTGDVIEPEDGIVAIGSGSMYALAAARSLMKHTGLSARDIVRESLETAAEICIYTNNHIVVEEV</sequence>
<name>HSLV_CHLL3</name>
<accession>Q3B4D9</accession>
<protein>
    <recommendedName>
        <fullName evidence="1">ATP-dependent protease subunit HslV</fullName>
        <ecNumber evidence="1">3.4.25.2</ecNumber>
    </recommendedName>
</protein>
<dbReference type="EC" id="3.4.25.2" evidence="1"/>
<dbReference type="EMBL" id="CP000096">
    <property type="protein sequence ID" value="ABB23792.1"/>
    <property type="molecule type" value="Genomic_DNA"/>
</dbReference>
<dbReference type="RefSeq" id="WP_011357666.1">
    <property type="nucleotide sequence ID" value="NC_007512.1"/>
</dbReference>
<dbReference type="SMR" id="Q3B4D9"/>
<dbReference type="STRING" id="319225.Plut_0930"/>
<dbReference type="KEGG" id="plt:Plut_0930"/>
<dbReference type="eggNOG" id="COG5405">
    <property type="taxonomic scope" value="Bacteria"/>
</dbReference>
<dbReference type="HOGENOM" id="CLU_093872_1_0_10"/>
<dbReference type="OrthoDB" id="9804884at2"/>
<dbReference type="Proteomes" id="UP000002709">
    <property type="component" value="Chromosome"/>
</dbReference>
<dbReference type="GO" id="GO:0009376">
    <property type="term" value="C:HslUV protease complex"/>
    <property type="evidence" value="ECO:0007669"/>
    <property type="project" value="UniProtKB-UniRule"/>
</dbReference>
<dbReference type="GO" id="GO:0005839">
    <property type="term" value="C:proteasome core complex"/>
    <property type="evidence" value="ECO:0007669"/>
    <property type="project" value="InterPro"/>
</dbReference>
<dbReference type="GO" id="GO:0046872">
    <property type="term" value="F:metal ion binding"/>
    <property type="evidence" value="ECO:0007669"/>
    <property type="project" value="UniProtKB-KW"/>
</dbReference>
<dbReference type="GO" id="GO:0004298">
    <property type="term" value="F:threonine-type endopeptidase activity"/>
    <property type="evidence" value="ECO:0007669"/>
    <property type="project" value="UniProtKB-KW"/>
</dbReference>
<dbReference type="GO" id="GO:0051603">
    <property type="term" value="P:proteolysis involved in protein catabolic process"/>
    <property type="evidence" value="ECO:0007669"/>
    <property type="project" value="InterPro"/>
</dbReference>
<dbReference type="CDD" id="cd01913">
    <property type="entry name" value="protease_HslV"/>
    <property type="match status" value="1"/>
</dbReference>
<dbReference type="Gene3D" id="3.60.20.10">
    <property type="entry name" value="Glutamine Phosphoribosylpyrophosphate, subunit 1, domain 1"/>
    <property type="match status" value="1"/>
</dbReference>
<dbReference type="HAMAP" id="MF_00248">
    <property type="entry name" value="HslV"/>
    <property type="match status" value="1"/>
</dbReference>
<dbReference type="InterPro" id="IPR022281">
    <property type="entry name" value="ATP-dep_Prtase_HsIV_su"/>
</dbReference>
<dbReference type="InterPro" id="IPR029055">
    <property type="entry name" value="Ntn_hydrolases_N"/>
</dbReference>
<dbReference type="InterPro" id="IPR001353">
    <property type="entry name" value="Proteasome_sua/b"/>
</dbReference>
<dbReference type="InterPro" id="IPR023333">
    <property type="entry name" value="Proteasome_suB-type"/>
</dbReference>
<dbReference type="NCBIfam" id="TIGR03692">
    <property type="entry name" value="ATP_dep_HslV"/>
    <property type="match status" value="1"/>
</dbReference>
<dbReference type="NCBIfam" id="NF003964">
    <property type="entry name" value="PRK05456.1"/>
    <property type="match status" value="1"/>
</dbReference>
<dbReference type="PANTHER" id="PTHR32194:SF0">
    <property type="entry name" value="ATP-DEPENDENT PROTEASE SUBUNIT HSLV"/>
    <property type="match status" value="1"/>
</dbReference>
<dbReference type="PANTHER" id="PTHR32194">
    <property type="entry name" value="METALLOPROTEASE TLDD"/>
    <property type="match status" value="1"/>
</dbReference>
<dbReference type="Pfam" id="PF00227">
    <property type="entry name" value="Proteasome"/>
    <property type="match status" value="1"/>
</dbReference>
<dbReference type="PIRSF" id="PIRSF039093">
    <property type="entry name" value="HslV"/>
    <property type="match status" value="1"/>
</dbReference>
<dbReference type="SUPFAM" id="SSF56235">
    <property type="entry name" value="N-terminal nucleophile aminohydrolases (Ntn hydrolases)"/>
    <property type="match status" value="1"/>
</dbReference>
<dbReference type="PROSITE" id="PS51476">
    <property type="entry name" value="PROTEASOME_BETA_2"/>
    <property type="match status" value="1"/>
</dbReference>
<feature type="chain" id="PRO_0000336784" description="ATP-dependent protease subunit HslV">
    <location>
        <begin position="1"/>
        <end position="182"/>
    </location>
</feature>
<feature type="active site" evidence="1">
    <location>
        <position position="12"/>
    </location>
</feature>
<feature type="binding site" evidence="1">
    <location>
        <position position="167"/>
    </location>
    <ligand>
        <name>Na(+)</name>
        <dbReference type="ChEBI" id="CHEBI:29101"/>
    </ligand>
</feature>
<feature type="binding site" evidence="1">
    <location>
        <position position="170"/>
    </location>
    <ligand>
        <name>Na(+)</name>
        <dbReference type="ChEBI" id="CHEBI:29101"/>
    </ligand>
</feature>
<feature type="binding site" evidence="1">
    <location>
        <position position="173"/>
    </location>
    <ligand>
        <name>Na(+)</name>
        <dbReference type="ChEBI" id="CHEBI:29101"/>
    </ligand>
</feature>
<organism>
    <name type="scientific">Chlorobium luteolum (strain DSM 273 / BCRC 81028 / 2530)</name>
    <name type="common">Pelodictyon luteolum</name>
    <dbReference type="NCBI Taxonomy" id="319225"/>
    <lineage>
        <taxon>Bacteria</taxon>
        <taxon>Pseudomonadati</taxon>
        <taxon>Chlorobiota</taxon>
        <taxon>Chlorobiia</taxon>
        <taxon>Chlorobiales</taxon>
        <taxon>Chlorobiaceae</taxon>
        <taxon>Chlorobium/Pelodictyon group</taxon>
        <taxon>Pelodictyon</taxon>
    </lineage>
</organism>
<keyword id="KW-0021">Allosteric enzyme</keyword>
<keyword id="KW-0963">Cytoplasm</keyword>
<keyword id="KW-0378">Hydrolase</keyword>
<keyword id="KW-0479">Metal-binding</keyword>
<keyword id="KW-0645">Protease</keyword>
<keyword id="KW-1185">Reference proteome</keyword>
<keyword id="KW-0915">Sodium</keyword>
<keyword id="KW-0346">Stress response</keyword>
<keyword id="KW-0888">Threonine protease</keyword>
<proteinExistence type="inferred from homology"/>